<sequence length="314" mass="35408">MDKKSRVLIVGGTGFIGKRIVKASLALGHPTYVLFRPEALSYIDKVQMLISFKQLGAKLLEASLDDHQGLVDVVKQVDVVISAVSGGLVRHHILDQLKLVEAIKEAGNIKRFLPSEFGMDPDVVEDPLEPGNITFIDKRKVRRAIEAATIPYTYVSSNMFAGFFAGSLAQLQDAPRMMPARDKVLIYGDGNVKGVYVDEDDAGIYIVKSIDDPRTLNKTVYIRPPMNILSQKEVVEIWERLSGLSLEKIYVSEDQLLNMKDKSYVEKMARCHLYHFFIKGDLYNFEIGPNATEGTKLYPEVKYTTMDSYMERYL</sequence>
<organism>
    <name type="scientific">Thuja plicata</name>
    <name type="common">Western red-cedar</name>
    <name type="synonym">Giant arborvitae</name>
    <dbReference type="NCBI Taxonomy" id="3316"/>
    <lineage>
        <taxon>Eukaryota</taxon>
        <taxon>Viridiplantae</taxon>
        <taxon>Streptophyta</taxon>
        <taxon>Embryophyta</taxon>
        <taxon>Tracheophyta</taxon>
        <taxon>Spermatophyta</taxon>
        <taxon>Pinopsida</taxon>
        <taxon>Pinidae</taxon>
        <taxon>Conifers II</taxon>
        <taxon>Cupressales</taxon>
        <taxon>Cupressaceae</taxon>
        <taxon>Thuja</taxon>
    </lineage>
</organism>
<keyword id="KW-0521">NADP</keyword>
<keyword id="KW-0560">Oxidoreductase</keyword>
<proteinExistence type="evidence at transcript level"/>
<protein>
    <recommendedName>
        <fullName>Bifunctional pinoresinol-lariciresinol reductase 3</fullName>
        <shortName>PLR-TP3</shortName>
    </recommendedName>
    <alternativeName>
        <fullName>(-)-lariciresinol reductase</fullName>
        <ecNumber>1.23.1.4</ecNumber>
    </alternativeName>
    <alternativeName>
        <fullName>(-)-pinoresinol reductase</fullName>
        <ecNumber>1.23.1.3</ecNumber>
    </alternativeName>
</protein>
<evidence type="ECO:0000250" key="1"/>
<evidence type="ECO:0000250" key="2">
    <source>
        <dbReference type="UniProtKB" id="Q9LD14"/>
    </source>
</evidence>
<evidence type="ECO:0000305" key="3"/>
<dbReference type="EC" id="1.23.1.4"/>
<dbReference type="EC" id="1.23.1.3"/>
<dbReference type="EMBL" id="AF242505">
    <property type="protein sequence ID" value="AAF63509.1"/>
    <property type="molecule type" value="mRNA"/>
</dbReference>
<dbReference type="EMBL" id="AF242500">
    <property type="protein sequence ID" value="AAF64183.1"/>
    <property type="molecule type" value="mRNA"/>
</dbReference>
<dbReference type="SMR" id="Q9LD00"/>
<dbReference type="GO" id="GO:0010284">
    <property type="term" value="F:lariciresinol reductase activity"/>
    <property type="evidence" value="ECO:0007669"/>
    <property type="project" value="UniProtKB-EC"/>
</dbReference>
<dbReference type="GO" id="GO:0010283">
    <property type="term" value="F:pinoresinol reductase activity"/>
    <property type="evidence" value="ECO:0007669"/>
    <property type="project" value="UniProtKB-EC"/>
</dbReference>
<dbReference type="GO" id="GO:0009807">
    <property type="term" value="P:lignan biosynthetic process"/>
    <property type="evidence" value="ECO:0007669"/>
    <property type="project" value="UniProtKB-ARBA"/>
</dbReference>
<dbReference type="CDD" id="cd05259">
    <property type="entry name" value="PCBER_SDR_a"/>
    <property type="match status" value="1"/>
</dbReference>
<dbReference type="Gene3D" id="3.40.50.720">
    <property type="entry name" value="NAD(P)-binding Rossmann-like Domain"/>
    <property type="match status" value="1"/>
</dbReference>
<dbReference type="Gene3D" id="3.90.25.10">
    <property type="entry name" value="UDP-galactose 4-epimerase, domain 1"/>
    <property type="match status" value="1"/>
</dbReference>
<dbReference type="InterPro" id="IPR036291">
    <property type="entry name" value="NAD(P)-bd_dom_sf"/>
</dbReference>
<dbReference type="InterPro" id="IPR008030">
    <property type="entry name" value="NmrA-like"/>
</dbReference>
<dbReference type="InterPro" id="IPR050608">
    <property type="entry name" value="NmrA-type/Isoflavone_red_sf"/>
</dbReference>
<dbReference type="InterPro" id="IPR045312">
    <property type="entry name" value="PCBER-like"/>
</dbReference>
<dbReference type="PANTHER" id="PTHR43349:SF4">
    <property type="entry name" value="PINORESINOL REDUCTASE 1-RELATED"/>
    <property type="match status" value="1"/>
</dbReference>
<dbReference type="PANTHER" id="PTHR43349">
    <property type="entry name" value="PINORESINOL REDUCTASE-RELATED"/>
    <property type="match status" value="1"/>
</dbReference>
<dbReference type="Pfam" id="PF05368">
    <property type="entry name" value="NmrA"/>
    <property type="match status" value="1"/>
</dbReference>
<dbReference type="SUPFAM" id="SSF51735">
    <property type="entry name" value="NAD(P)-binding Rossmann-fold domains"/>
    <property type="match status" value="1"/>
</dbReference>
<accession>Q9LD00</accession>
<reference key="1">
    <citation type="journal article" date="1999" name="J. Biol. Chem.">
        <title>Recombinant pinoresinol-lariciresinol reductases from western red cedar (Thuja plicata) catalyze opposite enantiospecific conversions.</title>
        <authorList>
            <person name="Fujita M."/>
            <person name="Gang D.R."/>
            <person name="Davin L.B."/>
            <person name="Lewis N.G."/>
        </authorList>
    </citation>
    <scope>NUCLEOTIDE SEQUENCE [MRNA]</scope>
    <source>
        <tissue>Stem</tissue>
    </source>
</reference>
<reference key="2">
    <citation type="journal article" date="1999" name="J. Biol. Chem.">
        <title>Evolution of plant defense mechanisms. Relationships of phenylcoumaran benzylic ether reductases to pinoresinol-lariciresinol and isoflavone reductases.</title>
        <authorList>
            <person name="Gang D.R."/>
            <person name="Kasahara H."/>
            <person name="Xia Z.Q."/>
            <person name="Vander Mijnsbrugge K."/>
            <person name="Bauw G."/>
            <person name="Boerjan W."/>
            <person name="Van Montagu M."/>
            <person name="Davin L.B."/>
            <person name="Lewis N.G."/>
        </authorList>
    </citation>
    <scope>NUCLEOTIDE SEQUENCE [MRNA]</scope>
    <source>
        <tissue>Stem</tissue>
    </source>
</reference>
<name>PILR3_THUPL</name>
<feature type="initiator methionine" description="Removed" evidence="1">
    <location>
        <position position="1"/>
    </location>
</feature>
<feature type="chain" id="PRO_0000422934" description="Bifunctional pinoresinol-lariciresinol reductase 3">
    <location>
        <begin position="2"/>
        <end position="314"/>
    </location>
</feature>
<feature type="active site" description="Proton acceptor" evidence="2">
    <location>
        <position position="138"/>
    </location>
</feature>
<feature type="binding site" evidence="2">
    <location>
        <begin position="11"/>
        <end position="17"/>
    </location>
    <ligand>
        <name>NADP(+)</name>
        <dbReference type="ChEBI" id="CHEBI:58349"/>
    </ligand>
</feature>
<feature type="binding site" evidence="2">
    <location>
        <position position="36"/>
    </location>
    <ligand>
        <name>NADP(+)</name>
        <dbReference type="ChEBI" id="CHEBI:58349"/>
    </ligand>
</feature>
<feature type="binding site" evidence="2">
    <location>
        <position position="45"/>
    </location>
    <ligand>
        <name>NADP(+)</name>
        <dbReference type="ChEBI" id="CHEBI:58349"/>
    </ligand>
</feature>
<feature type="binding site" evidence="2">
    <location>
        <position position="142"/>
    </location>
    <ligand>
        <name>NADP(+)</name>
        <dbReference type="ChEBI" id="CHEBI:58349"/>
    </ligand>
</feature>
<feature type="binding site" evidence="2">
    <location>
        <position position="272"/>
    </location>
    <ligand>
        <name>substrate</name>
    </ligand>
</feature>
<comment type="function">
    <text evidence="1">Reductase involved in lignan biosynthesis. Catalyzes the enantioselective sequential conversion of (-)-pinoresinol into (-)-lariciresinol and of (-)-lariciresinol into (+)-secoisolariciresinol. Abstracts the 4R-hydride from the NADPH cofactor during catalysis (By similarity).</text>
</comment>
<comment type="catalytic activity">
    <reaction>
        <text>(-)-lariciresinol + NADP(+) = (-)-pinoresinol + NADPH + H(+)</text>
        <dbReference type="Rhea" id="RHEA:34427"/>
        <dbReference type="ChEBI" id="CHEBI:15378"/>
        <dbReference type="ChEBI" id="CHEBI:57783"/>
        <dbReference type="ChEBI" id="CHEBI:58349"/>
        <dbReference type="ChEBI" id="CHEBI:67244"/>
        <dbReference type="ChEBI" id="CHEBI:67245"/>
        <dbReference type="EC" id="1.23.1.3"/>
    </reaction>
</comment>
<comment type="catalytic activity">
    <reaction>
        <text>(+)-secoisolariciresinol + NADP(+) = (-)-lariciresinol + NADPH + H(+)</text>
        <dbReference type="Rhea" id="RHEA:34431"/>
        <dbReference type="ChEBI" id="CHEBI:15378"/>
        <dbReference type="ChEBI" id="CHEBI:57783"/>
        <dbReference type="ChEBI" id="CHEBI:58349"/>
        <dbReference type="ChEBI" id="CHEBI:67244"/>
        <dbReference type="ChEBI" id="CHEBI:67247"/>
        <dbReference type="EC" id="1.23.1.4"/>
    </reaction>
</comment>
<comment type="subunit">
    <text evidence="1">Dimer.</text>
</comment>
<comment type="similarity">
    <text evidence="3">Belongs to the NmrA-type oxidoreductase family. Isoflavone reductase subfamily.</text>
</comment>